<keyword id="KW-0687">Ribonucleoprotein</keyword>
<keyword id="KW-0689">Ribosomal protein</keyword>
<feature type="chain" id="PRO_1000007575" description="Large ribosomal subunit protein uL29">
    <location>
        <begin position="1"/>
        <end position="64"/>
    </location>
</feature>
<sequence length="64" mass="7184">MKASELRGKDAAGLNQELSELLKAQFSLRMQKATQQLQNTSQLKKVRKDIARVQTVLTEKANAK</sequence>
<evidence type="ECO:0000255" key="1">
    <source>
        <dbReference type="HAMAP-Rule" id="MF_00374"/>
    </source>
</evidence>
<evidence type="ECO:0000305" key="2"/>
<proteinExistence type="inferred from homology"/>
<reference key="1">
    <citation type="journal article" date="2010" name="PLoS ONE">
        <title>The complete multipartite genome sequence of Cupriavidus necator JMP134, a versatile pollutant degrader.</title>
        <authorList>
            <person name="Lykidis A."/>
            <person name="Perez-Pantoja D."/>
            <person name="Ledger T."/>
            <person name="Mavromatis K."/>
            <person name="Anderson I.J."/>
            <person name="Ivanova N.N."/>
            <person name="Hooper S.D."/>
            <person name="Lapidus A."/>
            <person name="Lucas S."/>
            <person name="Gonzalez B."/>
            <person name="Kyrpides N.C."/>
        </authorList>
    </citation>
    <scope>NUCLEOTIDE SEQUENCE [LARGE SCALE GENOMIC DNA]</scope>
    <source>
        <strain>JMP134 / LMG 1197</strain>
    </source>
</reference>
<accession>Q46WF2</accession>
<dbReference type="EMBL" id="CP000090">
    <property type="protein sequence ID" value="AAZ62531.1"/>
    <property type="molecule type" value="Genomic_DNA"/>
</dbReference>
<dbReference type="SMR" id="Q46WF2"/>
<dbReference type="STRING" id="264198.Reut_A3171"/>
<dbReference type="KEGG" id="reu:Reut_A3171"/>
<dbReference type="eggNOG" id="COG0255">
    <property type="taxonomic scope" value="Bacteria"/>
</dbReference>
<dbReference type="HOGENOM" id="CLU_158491_1_1_4"/>
<dbReference type="OrthoDB" id="9815192at2"/>
<dbReference type="GO" id="GO:0022625">
    <property type="term" value="C:cytosolic large ribosomal subunit"/>
    <property type="evidence" value="ECO:0007669"/>
    <property type="project" value="TreeGrafter"/>
</dbReference>
<dbReference type="GO" id="GO:0003735">
    <property type="term" value="F:structural constituent of ribosome"/>
    <property type="evidence" value="ECO:0007669"/>
    <property type="project" value="InterPro"/>
</dbReference>
<dbReference type="GO" id="GO:0006412">
    <property type="term" value="P:translation"/>
    <property type="evidence" value="ECO:0007669"/>
    <property type="project" value="UniProtKB-UniRule"/>
</dbReference>
<dbReference type="CDD" id="cd00427">
    <property type="entry name" value="Ribosomal_L29_HIP"/>
    <property type="match status" value="1"/>
</dbReference>
<dbReference type="FunFam" id="1.10.287.310:FF:000001">
    <property type="entry name" value="50S ribosomal protein L29"/>
    <property type="match status" value="1"/>
</dbReference>
<dbReference type="Gene3D" id="1.10.287.310">
    <property type="match status" value="1"/>
</dbReference>
<dbReference type="HAMAP" id="MF_00374">
    <property type="entry name" value="Ribosomal_uL29"/>
    <property type="match status" value="1"/>
</dbReference>
<dbReference type="InterPro" id="IPR050063">
    <property type="entry name" value="Ribosomal_protein_uL29"/>
</dbReference>
<dbReference type="InterPro" id="IPR001854">
    <property type="entry name" value="Ribosomal_uL29"/>
</dbReference>
<dbReference type="InterPro" id="IPR018254">
    <property type="entry name" value="Ribosomal_uL29_CS"/>
</dbReference>
<dbReference type="InterPro" id="IPR036049">
    <property type="entry name" value="Ribosomal_uL29_sf"/>
</dbReference>
<dbReference type="NCBIfam" id="TIGR00012">
    <property type="entry name" value="L29"/>
    <property type="match status" value="1"/>
</dbReference>
<dbReference type="PANTHER" id="PTHR10916">
    <property type="entry name" value="60S RIBOSOMAL PROTEIN L35/50S RIBOSOMAL PROTEIN L29"/>
    <property type="match status" value="1"/>
</dbReference>
<dbReference type="PANTHER" id="PTHR10916:SF0">
    <property type="entry name" value="LARGE RIBOSOMAL SUBUNIT PROTEIN UL29C"/>
    <property type="match status" value="1"/>
</dbReference>
<dbReference type="Pfam" id="PF00831">
    <property type="entry name" value="Ribosomal_L29"/>
    <property type="match status" value="1"/>
</dbReference>
<dbReference type="SUPFAM" id="SSF46561">
    <property type="entry name" value="Ribosomal protein L29 (L29p)"/>
    <property type="match status" value="1"/>
</dbReference>
<dbReference type="PROSITE" id="PS00579">
    <property type="entry name" value="RIBOSOMAL_L29"/>
    <property type="match status" value="1"/>
</dbReference>
<name>RL29_CUPPJ</name>
<protein>
    <recommendedName>
        <fullName evidence="1">Large ribosomal subunit protein uL29</fullName>
    </recommendedName>
    <alternativeName>
        <fullName evidence="2">50S ribosomal protein L29</fullName>
    </alternativeName>
</protein>
<gene>
    <name evidence="1" type="primary">rpmC</name>
    <name type="ordered locus">Reut_A3171</name>
</gene>
<organism>
    <name type="scientific">Cupriavidus pinatubonensis (strain JMP 134 / LMG 1197)</name>
    <name type="common">Cupriavidus necator (strain JMP 134)</name>
    <dbReference type="NCBI Taxonomy" id="264198"/>
    <lineage>
        <taxon>Bacteria</taxon>
        <taxon>Pseudomonadati</taxon>
        <taxon>Pseudomonadota</taxon>
        <taxon>Betaproteobacteria</taxon>
        <taxon>Burkholderiales</taxon>
        <taxon>Burkholderiaceae</taxon>
        <taxon>Cupriavidus</taxon>
    </lineage>
</organism>
<comment type="similarity">
    <text evidence="1">Belongs to the universal ribosomal protein uL29 family.</text>
</comment>